<keyword id="KW-0963">Cytoplasm</keyword>
<keyword id="KW-0489">Methyltransferase</keyword>
<keyword id="KW-1185">Reference proteome</keyword>
<keyword id="KW-0698">rRNA processing</keyword>
<keyword id="KW-0949">S-adenosyl-L-methionine</keyword>
<keyword id="KW-0808">Transferase</keyword>
<protein>
    <recommendedName>
        <fullName evidence="1">Ribosomal RNA large subunit methyltransferase H</fullName>
        <ecNumber evidence="1">2.1.1.177</ecNumber>
    </recommendedName>
    <alternativeName>
        <fullName evidence="1">23S rRNA (pseudouridine1915-N3)-methyltransferase</fullName>
    </alternativeName>
    <alternativeName>
        <fullName evidence="1">23S rRNA m3Psi1915 methyltransferase</fullName>
    </alternativeName>
    <alternativeName>
        <fullName evidence="1">rRNA (pseudouridine-N3-)-methyltransferase RlmH</fullName>
    </alternativeName>
</protein>
<sequence>MKVTLCVVGRLRAGPERDLINDYLQRFDRTGRGLGLGPASVVEVEDRKGGGKAAEADLLRKAVPRGAVICALDERGKTMSSPQFADSLAGWRDAGRSDLAFLIGGADGLDKALRAQAEARLSFGAMVWPHMLARVMLAEQLYRAAAILAGTPYHRV</sequence>
<comment type="function">
    <text evidence="1">Specifically methylates the pseudouridine at position 1915 (m3Psi1915) in 23S rRNA.</text>
</comment>
<comment type="catalytic activity">
    <reaction evidence="1">
        <text>pseudouridine(1915) in 23S rRNA + S-adenosyl-L-methionine = N(3)-methylpseudouridine(1915) in 23S rRNA + S-adenosyl-L-homocysteine + H(+)</text>
        <dbReference type="Rhea" id="RHEA:42752"/>
        <dbReference type="Rhea" id="RHEA-COMP:10221"/>
        <dbReference type="Rhea" id="RHEA-COMP:10222"/>
        <dbReference type="ChEBI" id="CHEBI:15378"/>
        <dbReference type="ChEBI" id="CHEBI:57856"/>
        <dbReference type="ChEBI" id="CHEBI:59789"/>
        <dbReference type="ChEBI" id="CHEBI:65314"/>
        <dbReference type="ChEBI" id="CHEBI:74486"/>
        <dbReference type="EC" id="2.1.1.177"/>
    </reaction>
</comment>
<comment type="subunit">
    <text evidence="1">Homodimer.</text>
</comment>
<comment type="subcellular location">
    <subcellularLocation>
        <location evidence="1">Cytoplasm</location>
    </subcellularLocation>
</comment>
<comment type="similarity">
    <text evidence="1">Belongs to the RNA methyltransferase RlmH family.</text>
</comment>
<accession>A8LKJ4</accession>
<proteinExistence type="inferred from homology"/>
<reference key="1">
    <citation type="journal article" date="2010" name="ISME J.">
        <title>The complete genome sequence of the algal symbiont Dinoroseobacter shibae: a hitchhiker's guide to life in the sea.</title>
        <authorList>
            <person name="Wagner-Dobler I."/>
            <person name="Ballhausen B."/>
            <person name="Berger M."/>
            <person name="Brinkhoff T."/>
            <person name="Buchholz I."/>
            <person name="Bunk B."/>
            <person name="Cypionka H."/>
            <person name="Daniel R."/>
            <person name="Drepper T."/>
            <person name="Gerdts G."/>
            <person name="Hahnke S."/>
            <person name="Han C."/>
            <person name="Jahn D."/>
            <person name="Kalhoefer D."/>
            <person name="Kiss H."/>
            <person name="Klenk H.P."/>
            <person name="Kyrpides N."/>
            <person name="Liebl W."/>
            <person name="Liesegang H."/>
            <person name="Meincke L."/>
            <person name="Pati A."/>
            <person name="Petersen J."/>
            <person name="Piekarski T."/>
            <person name="Pommerenke C."/>
            <person name="Pradella S."/>
            <person name="Pukall R."/>
            <person name="Rabus R."/>
            <person name="Stackebrandt E."/>
            <person name="Thole S."/>
            <person name="Thompson L."/>
            <person name="Tielen P."/>
            <person name="Tomasch J."/>
            <person name="von Jan M."/>
            <person name="Wanphrut N."/>
            <person name="Wichels A."/>
            <person name="Zech H."/>
            <person name="Simon M."/>
        </authorList>
    </citation>
    <scope>NUCLEOTIDE SEQUENCE [LARGE SCALE GENOMIC DNA]</scope>
    <source>
        <strain>DSM 16493 / NCIMB 14021 / DFL 12</strain>
    </source>
</reference>
<gene>
    <name evidence="1" type="primary">rlmH</name>
    <name type="ordered locus">Dshi_0088</name>
</gene>
<organism>
    <name type="scientific">Dinoroseobacter shibae (strain DSM 16493 / NCIMB 14021 / DFL 12)</name>
    <dbReference type="NCBI Taxonomy" id="398580"/>
    <lineage>
        <taxon>Bacteria</taxon>
        <taxon>Pseudomonadati</taxon>
        <taxon>Pseudomonadota</taxon>
        <taxon>Alphaproteobacteria</taxon>
        <taxon>Rhodobacterales</taxon>
        <taxon>Roseobacteraceae</taxon>
        <taxon>Dinoroseobacter</taxon>
    </lineage>
</organism>
<evidence type="ECO:0000255" key="1">
    <source>
        <dbReference type="HAMAP-Rule" id="MF_00658"/>
    </source>
</evidence>
<dbReference type="EC" id="2.1.1.177" evidence="1"/>
<dbReference type="EMBL" id="CP000830">
    <property type="protein sequence ID" value="ABV91837.1"/>
    <property type="molecule type" value="Genomic_DNA"/>
</dbReference>
<dbReference type="RefSeq" id="WP_012176770.1">
    <property type="nucleotide sequence ID" value="NC_009952.1"/>
</dbReference>
<dbReference type="SMR" id="A8LKJ4"/>
<dbReference type="STRING" id="398580.Dshi_0088"/>
<dbReference type="KEGG" id="dsh:Dshi_0088"/>
<dbReference type="eggNOG" id="COG1576">
    <property type="taxonomic scope" value="Bacteria"/>
</dbReference>
<dbReference type="HOGENOM" id="CLU_100552_1_1_5"/>
<dbReference type="OrthoDB" id="9806643at2"/>
<dbReference type="Proteomes" id="UP000006833">
    <property type="component" value="Chromosome"/>
</dbReference>
<dbReference type="GO" id="GO:0005737">
    <property type="term" value="C:cytoplasm"/>
    <property type="evidence" value="ECO:0007669"/>
    <property type="project" value="UniProtKB-SubCell"/>
</dbReference>
<dbReference type="GO" id="GO:0070038">
    <property type="term" value="F:rRNA (pseudouridine-N3-)-methyltransferase activity"/>
    <property type="evidence" value="ECO:0007669"/>
    <property type="project" value="UniProtKB-UniRule"/>
</dbReference>
<dbReference type="CDD" id="cd18081">
    <property type="entry name" value="RlmH-like"/>
    <property type="match status" value="1"/>
</dbReference>
<dbReference type="Gene3D" id="3.40.1280.10">
    <property type="match status" value="1"/>
</dbReference>
<dbReference type="HAMAP" id="MF_00658">
    <property type="entry name" value="23SrRNA_methyltr_H"/>
    <property type="match status" value="1"/>
</dbReference>
<dbReference type="InterPro" id="IPR029028">
    <property type="entry name" value="Alpha/beta_knot_MTases"/>
</dbReference>
<dbReference type="InterPro" id="IPR003742">
    <property type="entry name" value="RlmH-like"/>
</dbReference>
<dbReference type="InterPro" id="IPR029026">
    <property type="entry name" value="tRNA_m1G_MTases_N"/>
</dbReference>
<dbReference type="NCBIfam" id="NF000988">
    <property type="entry name" value="PRK00103.2-2"/>
    <property type="match status" value="1"/>
</dbReference>
<dbReference type="NCBIfam" id="NF000989">
    <property type="entry name" value="PRK00103.2-3"/>
    <property type="match status" value="1"/>
</dbReference>
<dbReference type="PANTHER" id="PTHR33603">
    <property type="entry name" value="METHYLTRANSFERASE"/>
    <property type="match status" value="1"/>
</dbReference>
<dbReference type="PANTHER" id="PTHR33603:SF1">
    <property type="entry name" value="RIBOSOMAL RNA LARGE SUBUNIT METHYLTRANSFERASE H"/>
    <property type="match status" value="1"/>
</dbReference>
<dbReference type="Pfam" id="PF02590">
    <property type="entry name" value="SPOUT_MTase"/>
    <property type="match status" value="1"/>
</dbReference>
<dbReference type="PIRSF" id="PIRSF004505">
    <property type="entry name" value="MT_bac"/>
    <property type="match status" value="1"/>
</dbReference>
<dbReference type="SUPFAM" id="SSF75217">
    <property type="entry name" value="alpha/beta knot"/>
    <property type="match status" value="1"/>
</dbReference>
<name>RLMH_DINSH</name>
<feature type="chain" id="PRO_1000082802" description="Ribosomal RNA large subunit methyltransferase H">
    <location>
        <begin position="1"/>
        <end position="156"/>
    </location>
</feature>
<feature type="binding site" evidence="1">
    <location>
        <position position="72"/>
    </location>
    <ligand>
        <name>S-adenosyl-L-methionine</name>
        <dbReference type="ChEBI" id="CHEBI:59789"/>
    </ligand>
</feature>
<feature type="binding site" evidence="1">
    <location>
        <position position="104"/>
    </location>
    <ligand>
        <name>S-adenosyl-L-methionine</name>
        <dbReference type="ChEBI" id="CHEBI:59789"/>
    </ligand>
</feature>
<feature type="binding site" evidence="1">
    <location>
        <begin position="123"/>
        <end position="128"/>
    </location>
    <ligand>
        <name>S-adenosyl-L-methionine</name>
        <dbReference type="ChEBI" id="CHEBI:59789"/>
    </ligand>
</feature>